<reference key="1">
    <citation type="journal article" date="2011" name="J. Bacteriol.">
        <title>Comparative genomics of 28 Salmonella enterica isolates: evidence for CRISPR-mediated adaptive sublineage evolution.</title>
        <authorList>
            <person name="Fricke W.F."/>
            <person name="Mammel M.K."/>
            <person name="McDermott P.F."/>
            <person name="Tartera C."/>
            <person name="White D.G."/>
            <person name="Leclerc J.E."/>
            <person name="Ravel J."/>
            <person name="Cebula T.A."/>
        </authorList>
    </citation>
    <scope>NUCLEOTIDE SEQUENCE [LARGE SCALE GENOMIC DNA]</scope>
    <source>
        <strain>CT_02021853</strain>
    </source>
</reference>
<gene>
    <name evidence="1" type="primary">ruvB</name>
    <name type="ordered locus">SeD_A1354</name>
</gene>
<name>RUVB_SALDC</name>
<proteinExistence type="inferred from homology"/>
<comment type="function">
    <text evidence="1">The RuvA-RuvB-RuvC complex processes Holliday junction (HJ) DNA during genetic recombination and DNA repair, while the RuvA-RuvB complex plays an important role in the rescue of blocked DNA replication forks via replication fork reversal (RFR). RuvA specifically binds to HJ cruciform DNA, conferring on it an open structure. The RuvB hexamer acts as an ATP-dependent pump, pulling dsDNA into and through the RuvAB complex. RuvB forms 2 homohexamers on either side of HJ DNA bound by 1 or 2 RuvA tetramers; 4 subunits per hexamer contact DNA at a time. Coordinated motions by a converter formed by DNA-disengaged RuvB subunits stimulates ATP hydrolysis and nucleotide exchange. Immobilization of the converter enables RuvB to convert the ATP-contained energy into a lever motion, pulling 2 nucleotides of DNA out of the RuvA tetramer per ATP hydrolyzed, thus driving DNA branch migration. The RuvB motors rotate together with the DNA substrate, which together with the progressing nucleotide cycle form the mechanistic basis for DNA recombination by continuous HJ branch migration. Branch migration allows RuvC to scan DNA until it finds its consensus sequence, where it cleaves and resolves cruciform DNA.</text>
</comment>
<comment type="catalytic activity">
    <reaction evidence="1">
        <text>ATP + H2O = ADP + phosphate + H(+)</text>
        <dbReference type="Rhea" id="RHEA:13065"/>
        <dbReference type="ChEBI" id="CHEBI:15377"/>
        <dbReference type="ChEBI" id="CHEBI:15378"/>
        <dbReference type="ChEBI" id="CHEBI:30616"/>
        <dbReference type="ChEBI" id="CHEBI:43474"/>
        <dbReference type="ChEBI" id="CHEBI:456216"/>
    </reaction>
</comment>
<comment type="subunit">
    <text evidence="1">Homohexamer. Forms an RuvA(8)-RuvB(12)-Holliday junction (HJ) complex. HJ DNA is sandwiched between 2 RuvA tetramers; dsDNA enters through RuvA and exits via RuvB. An RuvB hexamer assembles on each DNA strand where it exits the tetramer. Each RuvB hexamer is contacted by two RuvA subunits (via domain III) on 2 adjacent RuvB subunits; this complex drives branch migration. In the full resolvosome a probable DNA-RuvA(4)-RuvB(12)-RuvC(2) complex forms which resolves the HJ.</text>
</comment>
<comment type="subcellular location">
    <subcellularLocation>
        <location evidence="1">Cytoplasm</location>
    </subcellularLocation>
</comment>
<comment type="domain">
    <text evidence="1">Has 3 domains, the large (RuvB-L) and small ATPase (RuvB-S) domains and the C-terminal head (RuvB-H) domain. The head domain binds DNA, while the ATPase domains jointly bind ATP, ADP or are empty depending on the state of the subunit in the translocation cycle. During a single DNA translocation step the structure of each domain remains the same, but their relative positions change.</text>
</comment>
<comment type="similarity">
    <text evidence="1">Belongs to the RuvB family.</text>
</comment>
<keyword id="KW-0067">ATP-binding</keyword>
<keyword id="KW-0963">Cytoplasm</keyword>
<keyword id="KW-0227">DNA damage</keyword>
<keyword id="KW-0233">DNA recombination</keyword>
<keyword id="KW-0234">DNA repair</keyword>
<keyword id="KW-0238">DNA-binding</keyword>
<keyword id="KW-0378">Hydrolase</keyword>
<keyword id="KW-0547">Nucleotide-binding</keyword>
<evidence type="ECO:0000255" key="1">
    <source>
        <dbReference type="HAMAP-Rule" id="MF_00016"/>
    </source>
</evidence>
<feature type="chain" id="PRO_1000089672" description="Holliday junction branch migration complex subunit RuvB">
    <location>
        <begin position="1"/>
        <end position="336"/>
    </location>
</feature>
<feature type="region of interest" description="Large ATPase domain (RuvB-L)" evidence="1">
    <location>
        <begin position="4"/>
        <end position="184"/>
    </location>
</feature>
<feature type="region of interest" description="Small ATPAse domain (RuvB-S)" evidence="1">
    <location>
        <begin position="185"/>
        <end position="255"/>
    </location>
</feature>
<feature type="region of interest" description="Head domain (RuvB-H)" evidence="1">
    <location>
        <begin position="258"/>
        <end position="336"/>
    </location>
</feature>
<feature type="binding site" evidence="1">
    <location>
        <position position="23"/>
    </location>
    <ligand>
        <name>ATP</name>
        <dbReference type="ChEBI" id="CHEBI:30616"/>
    </ligand>
</feature>
<feature type="binding site" evidence="1">
    <location>
        <position position="24"/>
    </location>
    <ligand>
        <name>ATP</name>
        <dbReference type="ChEBI" id="CHEBI:30616"/>
    </ligand>
</feature>
<feature type="binding site" evidence="1">
    <location>
        <position position="65"/>
    </location>
    <ligand>
        <name>ATP</name>
        <dbReference type="ChEBI" id="CHEBI:30616"/>
    </ligand>
</feature>
<feature type="binding site" evidence="1">
    <location>
        <position position="68"/>
    </location>
    <ligand>
        <name>ATP</name>
        <dbReference type="ChEBI" id="CHEBI:30616"/>
    </ligand>
</feature>
<feature type="binding site" evidence="1">
    <location>
        <position position="69"/>
    </location>
    <ligand>
        <name>ATP</name>
        <dbReference type="ChEBI" id="CHEBI:30616"/>
    </ligand>
</feature>
<feature type="binding site" evidence="1">
    <location>
        <position position="69"/>
    </location>
    <ligand>
        <name>Mg(2+)</name>
        <dbReference type="ChEBI" id="CHEBI:18420"/>
    </ligand>
</feature>
<feature type="binding site" evidence="1">
    <location>
        <position position="70"/>
    </location>
    <ligand>
        <name>ATP</name>
        <dbReference type="ChEBI" id="CHEBI:30616"/>
    </ligand>
</feature>
<feature type="binding site" evidence="1">
    <location>
        <begin position="131"/>
        <end position="133"/>
    </location>
    <ligand>
        <name>ATP</name>
        <dbReference type="ChEBI" id="CHEBI:30616"/>
    </ligand>
</feature>
<feature type="binding site" evidence="1">
    <location>
        <position position="174"/>
    </location>
    <ligand>
        <name>ATP</name>
        <dbReference type="ChEBI" id="CHEBI:30616"/>
    </ligand>
</feature>
<feature type="binding site" evidence="1">
    <location>
        <position position="184"/>
    </location>
    <ligand>
        <name>ATP</name>
        <dbReference type="ChEBI" id="CHEBI:30616"/>
    </ligand>
</feature>
<feature type="binding site" evidence="1">
    <location>
        <position position="221"/>
    </location>
    <ligand>
        <name>ATP</name>
        <dbReference type="ChEBI" id="CHEBI:30616"/>
    </ligand>
</feature>
<feature type="binding site" evidence="1">
    <location>
        <position position="294"/>
    </location>
    <ligand>
        <name>DNA</name>
        <dbReference type="ChEBI" id="CHEBI:16991"/>
    </ligand>
</feature>
<feature type="binding site" evidence="1">
    <location>
        <position position="313"/>
    </location>
    <ligand>
        <name>DNA</name>
        <dbReference type="ChEBI" id="CHEBI:16991"/>
    </ligand>
</feature>
<feature type="binding site" evidence="1">
    <location>
        <position position="318"/>
    </location>
    <ligand>
        <name>DNA</name>
        <dbReference type="ChEBI" id="CHEBI:16991"/>
    </ligand>
</feature>
<organism>
    <name type="scientific">Salmonella dublin (strain CT_02021853)</name>
    <dbReference type="NCBI Taxonomy" id="439851"/>
    <lineage>
        <taxon>Bacteria</taxon>
        <taxon>Pseudomonadati</taxon>
        <taxon>Pseudomonadota</taxon>
        <taxon>Gammaproteobacteria</taxon>
        <taxon>Enterobacterales</taxon>
        <taxon>Enterobacteriaceae</taxon>
        <taxon>Salmonella</taxon>
    </lineage>
</organism>
<accession>B5FSN8</accession>
<protein>
    <recommendedName>
        <fullName evidence="1">Holliday junction branch migration complex subunit RuvB</fullName>
        <ecNumber evidence="1">3.6.4.-</ecNumber>
    </recommendedName>
</protein>
<sequence>MIEADRLISAGATIAEDVADRAIRPKLLAEYVGQPQVRSQMEIFIQAAKRRGDALDHLLIFGPPGLGKTTLANIVANEMGVNLRTTSGPVLEKAGDLAAMLTNLEPHDVLFIDEIHRLSPVVEEVLYPAMEDYQLDIMIGEGPAARSIKIDLPPFTLIGATTRAGSLTSPLRDRFGIVQRLEFYQVPDLQHIVGRSARHMGLEMSDDGALEVARRARGTPRIANRLLRRVRDFAEVKHDGAISAEIAAQALDMLNVDAEGFDYMDRKLLLAVIDKFFGGPVGLDNLAAAIGEERETIEDVLEPYLIQQGFLQRTPRGRMATVRAWNHFGITPPEMP</sequence>
<dbReference type="EC" id="3.6.4.-" evidence="1"/>
<dbReference type="EMBL" id="CP001144">
    <property type="protein sequence ID" value="ACH73946.1"/>
    <property type="molecule type" value="Genomic_DNA"/>
</dbReference>
<dbReference type="RefSeq" id="WP_000568508.1">
    <property type="nucleotide sequence ID" value="NC_011205.1"/>
</dbReference>
<dbReference type="SMR" id="B5FSN8"/>
<dbReference type="KEGG" id="sed:SeD_A1354"/>
<dbReference type="HOGENOM" id="CLU_055599_1_0_6"/>
<dbReference type="Proteomes" id="UP000008322">
    <property type="component" value="Chromosome"/>
</dbReference>
<dbReference type="GO" id="GO:0005737">
    <property type="term" value="C:cytoplasm"/>
    <property type="evidence" value="ECO:0007669"/>
    <property type="project" value="UniProtKB-SubCell"/>
</dbReference>
<dbReference type="GO" id="GO:0048476">
    <property type="term" value="C:Holliday junction resolvase complex"/>
    <property type="evidence" value="ECO:0007669"/>
    <property type="project" value="UniProtKB-UniRule"/>
</dbReference>
<dbReference type="GO" id="GO:0005524">
    <property type="term" value="F:ATP binding"/>
    <property type="evidence" value="ECO:0007669"/>
    <property type="project" value="UniProtKB-UniRule"/>
</dbReference>
<dbReference type="GO" id="GO:0016887">
    <property type="term" value="F:ATP hydrolysis activity"/>
    <property type="evidence" value="ECO:0007669"/>
    <property type="project" value="InterPro"/>
</dbReference>
<dbReference type="GO" id="GO:0000400">
    <property type="term" value="F:four-way junction DNA binding"/>
    <property type="evidence" value="ECO:0007669"/>
    <property type="project" value="UniProtKB-UniRule"/>
</dbReference>
<dbReference type="GO" id="GO:0009378">
    <property type="term" value="F:four-way junction helicase activity"/>
    <property type="evidence" value="ECO:0007669"/>
    <property type="project" value="InterPro"/>
</dbReference>
<dbReference type="GO" id="GO:0006310">
    <property type="term" value="P:DNA recombination"/>
    <property type="evidence" value="ECO:0007669"/>
    <property type="project" value="UniProtKB-UniRule"/>
</dbReference>
<dbReference type="GO" id="GO:0006281">
    <property type="term" value="P:DNA repair"/>
    <property type="evidence" value="ECO:0007669"/>
    <property type="project" value="UniProtKB-UniRule"/>
</dbReference>
<dbReference type="CDD" id="cd00009">
    <property type="entry name" value="AAA"/>
    <property type="match status" value="1"/>
</dbReference>
<dbReference type="FunFam" id="1.10.10.10:FF:000086">
    <property type="entry name" value="Holliday junction ATP-dependent DNA helicase RuvB"/>
    <property type="match status" value="1"/>
</dbReference>
<dbReference type="FunFam" id="1.10.8.60:FF:000023">
    <property type="entry name" value="Holliday junction ATP-dependent DNA helicase RuvB"/>
    <property type="match status" value="1"/>
</dbReference>
<dbReference type="FunFam" id="3.40.50.300:FF:000073">
    <property type="entry name" value="Holliday junction ATP-dependent DNA helicase RuvB"/>
    <property type="match status" value="1"/>
</dbReference>
<dbReference type="Gene3D" id="1.10.8.60">
    <property type="match status" value="1"/>
</dbReference>
<dbReference type="Gene3D" id="3.40.50.300">
    <property type="entry name" value="P-loop containing nucleotide triphosphate hydrolases"/>
    <property type="match status" value="1"/>
</dbReference>
<dbReference type="Gene3D" id="1.10.10.10">
    <property type="entry name" value="Winged helix-like DNA-binding domain superfamily/Winged helix DNA-binding domain"/>
    <property type="match status" value="1"/>
</dbReference>
<dbReference type="HAMAP" id="MF_00016">
    <property type="entry name" value="DNA_HJ_migration_RuvB"/>
    <property type="match status" value="1"/>
</dbReference>
<dbReference type="InterPro" id="IPR003593">
    <property type="entry name" value="AAA+_ATPase"/>
</dbReference>
<dbReference type="InterPro" id="IPR041445">
    <property type="entry name" value="AAA_lid_4"/>
</dbReference>
<dbReference type="InterPro" id="IPR004605">
    <property type="entry name" value="DNA_helicase_Holl-junc_RuvB"/>
</dbReference>
<dbReference type="InterPro" id="IPR027417">
    <property type="entry name" value="P-loop_NTPase"/>
</dbReference>
<dbReference type="InterPro" id="IPR008824">
    <property type="entry name" value="RuvB-like_N"/>
</dbReference>
<dbReference type="InterPro" id="IPR008823">
    <property type="entry name" value="RuvB_C"/>
</dbReference>
<dbReference type="InterPro" id="IPR036388">
    <property type="entry name" value="WH-like_DNA-bd_sf"/>
</dbReference>
<dbReference type="InterPro" id="IPR036390">
    <property type="entry name" value="WH_DNA-bd_sf"/>
</dbReference>
<dbReference type="NCBIfam" id="NF000868">
    <property type="entry name" value="PRK00080.1"/>
    <property type="match status" value="1"/>
</dbReference>
<dbReference type="NCBIfam" id="TIGR00635">
    <property type="entry name" value="ruvB"/>
    <property type="match status" value="1"/>
</dbReference>
<dbReference type="PANTHER" id="PTHR42848">
    <property type="match status" value="1"/>
</dbReference>
<dbReference type="PANTHER" id="PTHR42848:SF1">
    <property type="entry name" value="HOLLIDAY JUNCTION BRANCH MIGRATION COMPLEX SUBUNIT RUVB"/>
    <property type="match status" value="1"/>
</dbReference>
<dbReference type="Pfam" id="PF17864">
    <property type="entry name" value="AAA_lid_4"/>
    <property type="match status" value="1"/>
</dbReference>
<dbReference type="Pfam" id="PF05491">
    <property type="entry name" value="RuvB_C"/>
    <property type="match status" value="1"/>
</dbReference>
<dbReference type="Pfam" id="PF05496">
    <property type="entry name" value="RuvB_N"/>
    <property type="match status" value="1"/>
</dbReference>
<dbReference type="SMART" id="SM00382">
    <property type="entry name" value="AAA"/>
    <property type="match status" value="1"/>
</dbReference>
<dbReference type="SUPFAM" id="SSF52540">
    <property type="entry name" value="P-loop containing nucleoside triphosphate hydrolases"/>
    <property type="match status" value="1"/>
</dbReference>
<dbReference type="SUPFAM" id="SSF46785">
    <property type="entry name" value="Winged helix' DNA-binding domain"/>
    <property type="match status" value="1"/>
</dbReference>